<comment type="function">
    <text evidence="1">The SecYEG-SecDF-YajC-YidC holo-translocon (HTL) protein secretase/insertase is a supercomplex required for protein secretion, insertion of proteins into membranes, and assembly of membrane protein complexes. While the SecYEG complex is essential for assembly of a number of proteins and complexes, the SecDF-YajC-YidC subcomplex facilitates these functions.</text>
</comment>
<comment type="subunit">
    <text evidence="1">Part of the SecDF-YidC-YajC translocase complex. The SecDF-YidC-YajC translocase forms a supercomplex with SecYEG, called the holo-translocon (HTL).</text>
</comment>
<comment type="subcellular location">
    <subcellularLocation>
        <location evidence="1">Cell inner membrane</location>
        <topology evidence="1">Single-pass membrane protein</topology>
    </subcellularLocation>
</comment>
<comment type="similarity">
    <text evidence="3">Belongs to the YajC family.</text>
</comment>
<organism>
    <name type="scientific">Buchnera aphidicola subsp. Acyrthosiphon pisum (strain APS)</name>
    <name type="common">Acyrthosiphon pisum symbiotic bacterium</name>
    <dbReference type="NCBI Taxonomy" id="107806"/>
    <lineage>
        <taxon>Bacteria</taxon>
        <taxon>Pseudomonadati</taxon>
        <taxon>Pseudomonadota</taxon>
        <taxon>Gammaproteobacteria</taxon>
        <taxon>Enterobacterales</taxon>
        <taxon>Erwiniaceae</taxon>
        <taxon>Buchnera</taxon>
    </lineage>
</organism>
<evidence type="ECO:0000250" key="1">
    <source>
        <dbReference type="UniProtKB" id="P0ADZ7"/>
    </source>
</evidence>
<evidence type="ECO:0000255" key="2"/>
<evidence type="ECO:0000305" key="3"/>
<reference key="1">
    <citation type="journal article" date="2000" name="Nature">
        <title>Genome sequence of the endocellular bacterial symbiont of aphids Buchnera sp. APS.</title>
        <authorList>
            <person name="Shigenobu S."/>
            <person name="Watanabe H."/>
            <person name="Hattori M."/>
            <person name="Sakaki Y."/>
            <person name="Ishikawa H."/>
        </authorList>
    </citation>
    <scope>NUCLEOTIDE SEQUENCE [LARGE SCALE GENOMIC DNA]</scope>
    <source>
        <strain>APS</strain>
    </source>
</reference>
<dbReference type="EMBL" id="BA000003">
    <property type="protein sequence ID" value="BAB12852.1"/>
    <property type="molecule type" value="Genomic_DNA"/>
</dbReference>
<dbReference type="RefSeq" id="NP_239966.1">
    <property type="nucleotide sequence ID" value="NC_002528.1"/>
</dbReference>
<dbReference type="RefSeq" id="WP_009874090.1">
    <property type="nucleotide sequence ID" value="NZ_AP036055.1"/>
</dbReference>
<dbReference type="SMR" id="P57234"/>
<dbReference type="STRING" id="563178.BUAP5A_132"/>
<dbReference type="EnsemblBacteria" id="BAB12852">
    <property type="protein sequence ID" value="BAB12852"/>
    <property type="gene ID" value="BAB12852"/>
</dbReference>
<dbReference type="KEGG" id="buc:BU134"/>
<dbReference type="PATRIC" id="fig|107806.10.peg.143"/>
<dbReference type="eggNOG" id="COG1862">
    <property type="taxonomic scope" value="Bacteria"/>
</dbReference>
<dbReference type="HOGENOM" id="CLU_116157_2_1_6"/>
<dbReference type="BioCyc" id="BAPH107806:GBZJ-133-MONOMER"/>
<dbReference type="Proteomes" id="UP000001806">
    <property type="component" value="Chromosome"/>
</dbReference>
<dbReference type="GO" id="GO:0005886">
    <property type="term" value="C:plasma membrane"/>
    <property type="evidence" value="ECO:0007669"/>
    <property type="project" value="UniProtKB-SubCell"/>
</dbReference>
<dbReference type="GO" id="GO:0015031">
    <property type="term" value="P:protein transport"/>
    <property type="evidence" value="ECO:0007669"/>
    <property type="project" value="UniProtKB-KW"/>
</dbReference>
<dbReference type="InterPro" id="IPR003849">
    <property type="entry name" value="Preprotein_translocase_YajC"/>
</dbReference>
<dbReference type="NCBIfam" id="TIGR00739">
    <property type="entry name" value="yajC"/>
    <property type="match status" value="1"/>
</dbReference>
<dbReference type="PANTHER" id="PTHR33909">
    <property type="entry name" value="SEC TRANSLOCON ACCESSORY COMPLEX SUBUNIT YAJC"/>
    <property type="match status" value="1"/>
</dbReference>
<dbReference type="PANTHER" id="PTHR33909:SF1">
    <property type="entry name" value="SEC TRANSLOCON ACCESSORY COMPLEX SUBUNIT YAJC"/>
    <property type="match status" value="1"/>
</dbReference>
<dbReference type="Pfam" id="PF02699">
    <property type="entry name" value="YajC"/>
    <property type="match status" value="1"/>
</dbReference>
<dbReference type="PRINTS" id="PR01853">
    <property type="entry name" value="YAJCTRNLCASE"/>
</dbReference>
<dbReference type="SMART" id="SM01323">
    <property type="entry name" value="YajC"/>
    <property type="match status" value="1"/>
</dbReference>
<proteinExistence type="inferred from homology"/>
<name>YAJC_BUCAI</name>
<feature type="chain" id="PRO_0000097026" description="Sec translocon accessory complex subunit YajC">
    <location>
        <begin position="1"/>
        <end position="111"/>
    </location>
</feature>
<feature type="transmembrane region" description="Helical" evidence="2">
    <location>
        <begin position="20"/>
        <end position="40"/>
    </location>
</feature>
<sequence length="111" mass="12595">MSFFIQNANAVVNGTSESSNSYSLIFMAVIFLLIFYFMLFRPQQKKDKEHKNLINSLVQGDEVITTSGLLGRIKKITKNGYILLELNETTEVFIKQDFIVSLLPKGTLKSL</sequence>
<keyword id="KW-0997">Cell inner membrane</keyword>
<keyword id="KW-1003">Cell membrane</keyword>
<keyword id="KW-0472">Membrane</keyword>
<keyword id="KW-0653">Protein transport</keyword>
<keyword id="KW-1185">Reference proteome</keyword>
<keyword id="KW-0811">Translocation</keyword>
<keyword id="KW-0812">Transmembrane</keyword>
<keyword id="KW-1133">Transmembrane helix</keyword>
<keyword id="KW-0813">Transport</keyword>
<accession>P57234</accession>
<protein>
    <recommendedName>
        <fullName>Sec translocon accessory complex subunit YajC</fullName>
    </recommendedName>
</protein>
<gene>
    <name type="primary">yajC</name>
    <name type="ordered locus">BU134</name>
</gene>